<organism>
    <name type="scientific">Klebsiella phage KP36</name>
    <name type="common">Bacteriophage KP36</name>
    <dbReference type="NCBI Taxonomy" id="1129191"/>
    <lineage>
        <taxon>Viruses</taxon>
        <taxon>Duplodnaviria</taxon>
        <taxon>Heunggongvirae</taxon>
        <taxon>Uroviricota</taxon>
        <taxon>Caudoviricetes</taxon>
        <taxon>Drexlerviridae</taxon>
        <taxon>Webervirus</taxon>
        <taxon>Webervirus KP36</taxon>
    </lineage>
</organism>
<dbReference type="EMBL" id="JF501022">
    <property type="protein sequence ID" value="AEX26807.1"/>
    <property type="molecule type" value="Genomic_DNA"/>
</dbReference>
<dbReference type="RefSeq" id="YP_009226011.1">
    <property type="nucleotide sequence ID" value="NC_029099.1"/>
</dbReference>
<dbReference type="SMR" id="K9L8K6"/>
<dbReference type="GeneID" id="26797061"/>
<dbReference type="KEGG" id="vg:26797061"/>
<dbReference type="OrthoDB" id="1987at10239"/>
<dbReference type="Proteomes" id="UP000010391">
    <property type="component" value="Genome"/>
</dbReference>
<dbReference type="GO" id="GO:0098024">
    <property type="term" value="C:virus tail, fiber"/>
    <property type="evidence" value="ECO:0007669"/>
    <property type="project" value="UniProtKB-KW"/>
</dbReference>
<dbReference type="GO" id="GO:0098671">
    <property type="term" value="P:adhesion receptor-mediated virion attachment to host cell"/>
    <property type="evidence" value="ECO:0007669"/>
    <property type="project" value="UniProtKB-KW"/>
</dbReference>
<dbReference type="GO" id="GO:0098994">
    <property type="term" value="P:symbiont entry into host cell via disruption of host cell envelope"/>
    <property type="evidence" value="ECO:0007669"/>
    <property type="project" value="UniProtKB-KW"/>
</dbReference>
<dbReference type="GO" id="GO:0098996">
    <property type="term" value="P:symbiont entry into host cell via disruption of host cell glycocalyx"/>
    <property type="evidence" value="ECO:0000314"/>
    <property type="project" value="UniProtKB"/>
</dbReference>
<dbReference type="InterPro" id="IPR011050">
    <property type="entry name" value="Pectin_lyase_fold/virulence"/>
</dbReference>
<dbReference type="SUPFAM" id="SSF51126">
    <property type="entry name" value="Pectin lyase-like"/>
    <property type="match status" value="1"/>
</dbReference>
<proteinExistence type="evidence at protein level"/>
<gene>
    <name evidence="11" type="ORF">KP36_049</name>
</gene>
<comment type="function">
    <text evidence="3 4 5 10">Functions as a receptor binding protein (RBP) and probably mediates the attachment to the host capsular exopolysaccharides (Probable). Displays a depolymerase activity that specifically degrades the K63-type polysaccharides of Klebsiella pneumoniae capsule, which allows the phage to reach the host cell membrane and bind the entry receptor (PubMed:27916936, PubMed:33947754, PubMed:34768992).</text>
</comment>
<comment type="biophysicochemical properties">
    <phDependence>
        <text evidence="3">Optimum pH is 4-7.</text>
    </phDependence>
    <temperatureDependence>
        <text evidence="3">Optimum temperature is 20-37 degrees Celsius.</text>
    </temperatureDependence>
</comment>
<comment type="subunit">
    <text evidence="3">Homotrimer.</text>
</comment>
<comment type="subcellular location">
    <subcellularLocation>
        <location evidence="9">Virion</location>
    </subcellularLocation>
    <text evidence="9">Tail appendage.</text>
</comment>
<comment type="domain">
    <text evidence="7">The N-terminus anchors the RBP to the virion.</text>
</comment>
<comment type="miscellaneous">
    <text evidence="3 5">Does not affect the antibiotic susceptibility of Klebsiella strains (PubMed:27916936). Exposure to the depolymerase of the phage induces mutations in the cps (capsule) locus of the host bacterial population (PubMed:34768992).</text>
</comment>
<comment type="similarity">
    <text evidence="9">In the N-terminal section; belongs to the Webervirus depolymerase family.</text>
</comment>
<comment type="similarity">
    <text evidence="9">In the C-terminal section; belongs to the K63-specific depolymerase family.</text>
</comment>
<name>DEPOL_BPK36</name>
<feature type="chain" id="PRO_0000458737" description="Depolymerase, capsule K63-specific">
    <location>
        <begin position="1"/>
        <end position="883"/>
    </location>
</feature>
<feature type="region of interest" description="Disordered" evidence="2">
    <location>
        <begin position="137"/>
        <end position="161"/>
    </location>
</feature>
<feature type="compositionally biased region" description="Low complexity" evidence="2">
    <location>
        <begin position="137"/>
        <end position="157"/>
    </location>
</feature>
<protein>
    <recommendedName>
        <fullName evidence="9">Depolymerase, capsule K63-specific</fullName>
        <shortName evidence="6">DepoKP36</shortName>
    </recommendedName>
    <alternativeName>
        <fullName evidence="7 8">Gene product 50</fullName>
        <shortName evidence="7 8">gp50</shortName>
    </alternativeName>
    <alternativeName>
        <fullName evidence="8">KP36gp50</fullName>
    </alternativeName>
    <alternativeName>
        <fullName evidence="1">Tail spike protein</fullName>
    </alternativeName>
</protein>
<sequence length="883" mass="93884">MALYREGKAAMAADGTVTGTGTKWQSSLSLIRPGATIMFLSSPIQMAVVNKVVSDTEIKAITTNGAVVASSDYAILLSDSLTVDGLAQDVAETLRYYQSQETVIADAVEFFKNFDFDSLQDLANQINADSESAQSSAAAAAASENAAKTSENNAKSSEVAAENARDQVQQIINDAGDASTLVVLANPDGFRHIGRCKDIATLRTIEPVESRQVIEVLSYYNGLAQGGGTFWYDPNDSVTEDNGGSCIVTNGGKRWKRIIDGAVDVLSFGAKPDDISFDSAPHIQAALDNHDAVSLYGRSYYIGSPIYMPSRTVFDGMGGKLTSIAPSTAGFMAGSIFAPGNYHPDFWEEVPKVAATTTLGSANITLADPNIVNVGDIIRLSSTTGVLSAGFFVSEYLQMARVLSKTGNVITIDGPVESQLTLVAANANQPGYLARFNKPLFCCVDSIIQNIEIDTWDYWTADSATYNVKFSNIWGSAKAVAYGNTFCRSLFEDIRIVFSGRVSELAFGSHDTNLVRITAIASPKGLSASVVFGWAESGRRCTIDTFSIMLNANANPSTVIRVSGHRDSLIKNGSIYVHNNTNNILSVENYGTTADGVRPDCDNITFENVSIFVTGSSAVVCDVYKSADNSVIKNVAFKNIKYFGPTPSVALYRARGTLANFVKGVQANISSDTGGAIVLSNSENNVLTFTGPVSVTSLVSAAAKNTLSIRNYARSSAKANNFTQESTLNVTDTTANAVSKEFTYPAGSLRINDKIKLSLGGSTAGTVGKKTVQVGFIGSDGAFKYVELAALATDQVYWTMEVEISFLRTTNSQTNELETSAIITSFLSKGAATGAALSGSRALAVVSDLALSNFVVQVRAWKENAADGLSLSRMNLQLEDLTA</sequence>
<evidence type="ECO:0000250" key="1">
    <source>
        <dbReference type="UniProtKB" id="P0DTN8"/>
    </source>
</evidence>
<evidence type="ECO:0000256" key="2">
    <source>
        <dbReference type="SAM" id="MobiDB-lite"/>
    </source>
</evidence>
<evidence type="ECO:0000269" key="3">
    <source>
    </source>
</evidence>
<evidence type="ECO:0000269" key="4">
    <source>
    </source>
</evidence>
<evidence type="ECO:0000269" key="5">
    <source>
    </source>
</evidence>
<evidence type="ECO:0000303" key="6">
    <source>
    </source>
</evidence>
<evidence type="ECO:0000303" key="7">
    <source>
    </source>
</evidence>
<evidence type="ECO:0000303" key="8">
    <source>
    </source>
</evidence>
<evidence type="ECO:0000305" key="9"/>
<evidence type="ECO:0000305" key="10">
    <source>
    </source>
</evidence>
<evidence type="ECO:0000312" key="11">
    <source>
        <dbReference type="EMBL" id="AEX26807.1"/>
    </source>
</evidence>
<organismHost>
    <name type="scientific">Klebsiella pneumoniae</name>
    <dbReference type="NCBI Taxonomy" id="573"/>
</organismHost>
<accession>K9L8K6</accession>
<keyword id="KW-1238">Degradation of host capsule during virus entry</keyword>
<keyword id="KW-1235">Degradation of host cell envelope components during virus entry</keyword>
<keyword id="KW-0945">Host-virus interaction</keyword>
<keyword id="KW-1185">Reference proteome</keyword>
<keyword id="KW-1233">Viral attachment to host adhesion receptor</keyword>
<keyword id="KW-1161">Viral attachment to host cell</keyword>
<keyword id="KW-1230">Viral tail fiber protein</keyword>
<keyword id="KW-1227">Viral tail protein</keyword>
<keyword id="KW-0946">Virion</keyword>
<keyword id="KW-1160">Virus entry into host cell</keyword>
<reference key="1">
    <citation type="submission" date="2011-03" db="EMBL/GenBank/DDBJ databases">
        <title>Characterising the biology of novel lytic bacteriophages infecting multidrug resistant Klebsiella pneumoniae.</title>
        <authorList>
            <person name="Drulis-Kawa Z."/>
            <person name="Kesik-Szeloch A."/>
            <person name="Maciaszczyk-Dziubinska E."/>
            <person name="Kropinski A.M."/>
        </authorList>
    </citation>
    <scope>NUCLEOTIDE SEQUENCE [LARGE SCALE GENOMIC DNA]</scope>
</reference>
<reference key="2">
    <citation type="journal article" date="2016" name="Viruses">
        <title>Capsule-Targeting Depolymerase, Derived from Klebsiella KP36 Phage, as a Tool for the Development of Anti-Virulent Strategy.</title>
        <authorList>
            <person name="Majkowska-Skrobek G."/>
            <person name="Latka A."/>
            <person name="Berisio R."/>
            <person name="Maciejewska B."/>
            <person name="Squeglia F."/>
            <person name="Romano M."/>
            <person name="Lavigne R."/>
            <person name="Struve C."/>
            <person name="Drulis-Kawa Z."/>
        </authorList>
    </citation>
    <scope>FUNCTION</scope>
    <scope>BIOPHYSICOCHEMICAL PROPERTIES</scope>
    <scope>SUBUNIT</scope>
</reference>
<reference key="3">
    <citation type="journal article" date="2021" name="Int. J. Mol. Sci.">
        <title>The Mutation in wbaP cps Gene Cluster Selected by Phage-Borne Depolymerase Abolishes Capsule Production and Diminishes the Virulence of Klebsiella pneumoniae.</title>
        <authorList>
            <person name="Kaszowska M."/>
            <person name="Majkowska-Skrobek G."/>
            <person name="Markwitz P."/>
            <person name="Lood C."/>
            <person name="Jachymek W."/>
            <person name="Maciejewska A."/>
            <person name="Lukasiewicz J."/>
            <person name="Drulis-Kawa Z."/>
        </authorList>
    </citation>
    <scope>FUNCTION</scope>
</reference>
<reference key="4">
    <citation type="journal article" date="2021" name="MBio">
        <title>Engineering the Modular Receptor-Binding Proteins of Klebsiella Phages Switches Their Capsule Serotype Specificity.</title>
        <authorList>
            <person name="Latka A."/>
            <person name="Lemire S."/>
            <person name="Grimon D."/>
            <person name="Dams D."/>
            <person name="Maciejewska B."/>
            <person name="Lu T."/>
            <person name="Drulis-Kawa Z."/>
            <person name="Briers Y."/>
        </authorList>
    </citation>
    <scope>FUNCTION</scope>
    <scope>DOMAIN</scope>
</reference>
<reference key="5">
    <citation type="journal article" date="2019" name="Front. Microbiol.">
        <title>Modeling the Architecture of Depolymerase-Containing Receptor Binding Proteins in Klebsiella Phages.</title>
        <authorList>
            <person name="Latka A."/>
            <person name="Leiman P.G."/>
            <person name="Drulis-Kawa Z."/>
            <person name="Briers Y."/>
        </authorList>
    </citation>
    <scope>REVIEW</scope>
</reference>